<protein>
    <recommendedName>
        <fullName>2-hydroxy-6-oxo-2,4-heptadienoate hydrolase</fullName>
        <shortName>HOHH</shortName>
        <ecNumber evidence="6">3.7.1.25</ecNumber>
    </recommendedName>
</protein>
<sequence>MTNVNAEIGRMVLAGGIETNLHDVGAGNPVVLVHGSGPGVTAWANWRTVMPELSRHRRVIAPDMVGFGFTQRPHGIHYGVESWVAHLAGILDALELDRVDLVGNSFGGALSLAFAIRFPHRVRRLVLMGAVGVSFELTDGLDAVWGYEPSVPNMRKVMDYFAYDRSLVSDELAELRYKASTRPGFQEAFASMFPAPRQRWVDALASSDQDIRDIRHETLILHGRDDRVIPLETSLRLNQLIEPSQLHVFGRCGHWVQIEQNRGFIRLVNDFLAAED</sequence>
<dbReference type="EC" id="3.7.1.25" evidence="6"/>
<dbReference type="EMBL" id="M64080">
    <property type="protein sequence ID" value="AAA25817.1"/>
    <property type="molecule type" value="Genomic_DNA"/>
</dbReference>
<dbReference type="EMBL" id="CP000712">
    <property type="protein sequence ID" value="ABQ79013.1"/>
    <property type="molecule type" value="Genomic_DNA"/>
</dbReference>
<dbReference type="EMBL" id="J04996">
    <property type="status" value="NOT_ANNOTATED_CDS"/>
    <property type="molecule type" value="Genomic_DNA"/>
</dbReference>
<dbReference type="PIR" id="JH0245">
    <property type="entry name" value="JH0245"/>
</dbReference>
<dbReference type="SMR" id="P23133"/>
<dbReference type="ESTHER" id="psepu-todf">
    <property type="family name" value="Carbon-carbon_bond_hydrolase"/>
</dbReference>
<dbReference type="KEGG" id="ppf:Pput_2882"/>
<dbReference type="eggNOG" id="COG2267">
    <property type="taxonomic scope" value="Bacteria"/>
</dbReference>
<dbReference type="HOGENOM" id="CLU_020336_13_2_6"/>
<dbReference type="BioCyc" id="MetaCyc:MONOMER-11393"/>
<dbReference type="SABIO-RK" id="P23133"/>
<dbReference type="UniPathway" id="UPA00273"/>
<dbReference type="GO" id="GO:0016020">
    <property type="term" value="C:membrane"/>
    <property type="evidence" value="ECO:0007669"/>
    <property type="project" value="TreeGrafter"/>
</dbReference>
<dbReference type="GO" id="GO:0018765">
    <property type="term" value="F:2-hydroxy-6-oxohepta-2,4-dienoate hydrolase activity"/>
    <property type="evidence" value="ECO:0007669"/>
    <property type="project" value="UniProtKB-EC"/>
</dbReference>
<dbReference type="GO" id="GO:0052689">
    <property type="term" value="F:carboxylic ester hydrolase activity"/>
    <property type="evidence" value="ECO:0007669"/>
    <property type="project" value="UniProtKB-KW"/>
</dbReference>
<dbReference type="GO" id="GO:0042203">
    <property type="term" value="P:toluene catabolic process"/>
    <property type="evidence" value="ECO:0007669"/>
    <property type="project" value="UniProtKB-UniPathway"/>
</dbReference>
<dbReference type="Gene3D" id="3.40.50.1820">
    <property type="entry name" value="alpha/beta hydrolase"/>
    <property type="match status" value="1"/>
</dbReference>
<dbReference type="InterPro" id="IPR000073">
    <property type="entry name" value="AB_hydrolase_1"/>
</dbReference>
<dbReference type="InterPro" id="IPR029058">
    <property type="entry name" value="AB_hydrolase_fold"/>
</dbReference>
<dbReference type="InterPro" id="IPR050266">
    <property type="entry name" value="AB_hydrolase_sf"/>
</dbReference>
<dbReference type="InterPro" id="IPR000639">
    <property type="entry name" value="Epox_hydrolase-like"/>
</dbReference>
<dbReference type="PANTHER" id="PTHR43798:SF31">
    <property type="entry name" value="AB HYDROLASE SUPERFAMILY PROTEIN YCLE"/>
    <property type="match status" value="1"/>
</dbReference>
<dbReference type="PANTHER" id="PTHR43798">
    <property type="entry name" value="MONOACYLGLYCEROL LIPASE"/>
    <property type="match status" value="1"/>
</dbReference>
<dbReference type="Pfam" id="PF00561">
    <property type="entry name" value="Abhydrolase_1"/>
    <property type="match status" value="1"/>
</dbReference>
<dbReference type="PRINTS" id="PR00111">
    <property type="entry name" value="ABHYDROLASE"/>
</dbReference>
<dbReference type="PRINTS" id="PR00412">
    <property type="entry name" value="EPOXHYDRLASE"/>
</dbReference>
<dbReference type="SUPFAM" id="SSF53474">
    <property type="entry name" value="alpha/beta-Hydrolases"/>
    <property type="match status" value="1"/>
</dbReference>
<name>TODF_PSEP1</name>
<feature type="chain" id="PRO_0000207057" description="2-hydroxy-6-oxo-2,4-heptadienoate hydrolase">
    <location>
        <begin position="1"/>
        <end position="276"/>
    </location>
</feature>
<feature type="domain" description="AB hydrolase-1" evidence="2">
    <location>
        <begin position="28"/>
        <end position="259"/>
    </location>
</feature>
<feature type="active site" evidence="1">
    <location>
        <position position="105"/>
    </location>
</feature>
<feature type="active site" evidence="1">
    <location>
        <position position="226"/>
    </location>
</feature>
<feature type="active site" evidence="1">
    <location>
        <position position="254"/>
    </location>
</feature>
<evidence type="ECO:0000250" key="1"/>
<evidence type="ECO:0000255" key="2"/>
<evidence type="ECO:0000269" key="3">
    <source>
    </source>
</evidence>
<evidence type="ECO:0000269" key="4">
    <source>
    </source>
</evidence>
<evidence type="ECO:0000305" key="5"/>
<evidence type="ECO:0000305" key="6">
    <source>
    </source>
</evidence>
<comment type="function">
    <text evidence="3 4">Catalyzes the hydrolysis of 2-hydroxy-6-oxohepta-2,4-dienoate into 2-hydroxypenta-2,4-dienoate and acetate.</text>
</comment>
<comment type="catalytic activity">
    <reaction evidence="6">
        <text>(2Z,4E)-2-hydroxy-6-oxohepta-2,4-dienoate + H2O = (2Z)-2-hydroxypenta-2,4-dienoate + acetate + H(+)</text>
        <dbReference type="Rhea" id="RHEA:59220"/>
        <dbReference type="ChEBI" id="CHEBI:15377"/>
        <dbReference type="ChEBI" id="CHEBI:15378"/>
        <dbReference type="ChEBI" id="CHEBI:30089"/>
        <dbReference type="ChEBI" id="CHEBI:67152"/>
        <dbReference type="ChEBI" id="CHEBI:144490"/>
        <dbReference type="EC" id="3.7.1.25"/>
    </reaction>
</comment>
<comment type="pathway">
    <text>Xenobiotic degradation; toluene degradation.</text>
</comment>
<comment type="similarity">
    <text evidence="5">Belongs to the DmpD/TodF/XylF esterase family.</text>
</comment>
<proteinExistence type="evidence at protein level"/>
<accession>P23133</accession>
<accession>A5W4F3</accession>
<keyword id="KW-0058">Aromatic hydrocarbons catabolism</keyword>
<keyword id="KW-0378">Hydrolase</keyword>
<keyword id="KW-0719">Serine esterase</keyword>
<gene>
    <name type="primary">todF</name>
    <name type="ordered locus">Pput_2882</name>
</gene>
<reference key="1">
    <citation type="journal article" date="1991" name="Gene">
        <title>Location and sequence of the todF gene encoding 2-hydroxy-6-oxohepta-2,4-dienoate hydrolase in Pseudomonas putida F1.</title>
        <authorList>
            <person name="Menn F.M."/>
            <person name="Zylstra G.J."/>
            <person name="Gibson D.T."/>
        </authorList>
    </citation>
    <scope>NUCLEOTIDE SEQUENCE [GENOMIC DNA]</scope>
    <scope>FUNCTION</scope>
</reference>
<reference key="2">
    <citation type="submission" date="2007-05" db="EMBL/GenBank/DDBJ databases">
        <title>Complete sequence of Pseudomonas putida F1.</title>
        <authorList>
            <consortium name="US DOE Joint Genome Institute"/>
            <person name="Copeland A."/>
            <person name="Lucas S."/>
            <person name="Lapidus A."/>
            <person name="Barry K."/>
            <person name="Detter J.C."/>
            <person name="Glavina del Rio T."/>
            <person name="Hammon N."/>
            <person name="Israni S."/>
            <person name="Dalin E."/>
            <person name="Tice H."/>
            <person name="Pitluck S."/>
            <person name="Chain P."/>
            <person name="Malfatti S."/>
            <person name="Shin M."/>
            <person name="Vergez L."/>
            <person name="Schmutz J."/>
            <person name="Larimer F."/>
            <person name="Land M."/>
            <person name="Hauser L."/>
            <person name="Kyrpides N."/>
            <person name="Lykidis A."/>
            <person name="Parales R."/>
            <person name="Richardson P."/>
        </authorList>
    </citation>
    <scope>NUCLEOTIDE SEQUENCE [LARGE SCALE GENOMIC DNA]</scope>
    <source>
        <strain>ATCC 700007 / DSM 6899 / JCM 31910 / BCRC 17059 / LMG 24140 / F1</strain>
    </source>
</reference>
<reference key="3">
    <citation type="journal article" date="1989" name="J. Biol. Chem.">
        <title>Toluene degradation by Pseudomonas putida F1. Nucleotide sequence of the todC1C2BADE genes and their expression in Escherichia coli.</title>
        <authorList>
            <person name="Zylstra G.J."/>
            <person name="Gibson D.T."/>
        </authorList>
    </citation>
    <scope>NUCLEOTIDE SEQUENCE [GENOMIC DNA] OF 104-276</scope>
</reference>
<reference key="4">
    <citation type="journal article" date="1994" name="Appl. Environ. Microbiol.">
        <title>Biodegradation of 2-nitrotoluene by Pseudomonas sp. strain JS42.</title>
        <authorList>
            <person name="Haigler B.E."/>
            <person name="Wallace W.H."/>
            <person name="Spain J.C."/>
        </authorList>
    </citation>
    <scope>FUNCTION</scope>
    <scope>CATALYTIC ACTIVITY</scope>
</reference>
<organism>
    <name type="scientific">Pseudomonas putida (strain ATCC 700007 / DSM 6899 / JCM 31910 / BCRC 17059 / LMG 24140 / F1)</name>
    <dbReference type="NCBI Taxonomy" id="351746"/>
    <lineage>
        <taxon>Bacteria</taxon>
        <taxon>Pseudomonadati</taxon>
        <taxon>Pseudomonadota</taxon>
        <taxon>Gammaproteobacteria</taxon>
        <taxon>Pseudomonadales</taxon>
        <taxon>Pseudomonadaceae</taxon>
        <taxon>Pseudomonas</taxon>
    </lineage>
</organism>